<proteinExistence type="evidence at transcript level"/>
<dbReference type="EMBL" id="CR860027">
    <property type="protein sequence ID" value="CAH92178.1"/>
    <property type="status" value="ALT_INIT"/>
    <property type="molecule type" value="mRNA"/>
</dbReference>
<dbReference type="RefSeq" id="NP_001127519.1">
    <property type="nucleotide sequence ID" value="NM_001134047.1"/>
</dbReference>
<dbReference type="SMR" id="Q5R7T2"/>
<dbReference type="FunCoup" id="Q5R7T2">
    <property type="interactions" value="3936"/>
</dbReference>
<dbReference type="STRING" id="9601.ENSPPYP00000007997"/>
<dbReference type="GeneID" id="100174595"/>
<dbReference type="KEGG" id="pon:100174595"/>
<dbReference type="CTD" id="84656"/>
<dbReference type="eggNOG" id="KOG0409">
    <property type="taxonomic scope" value="Eukaryota"/>
</dbReference>
<dbReference type="eggNOG" id="KOG1904">
    <property type="taxonomic scope" value="Eukaryota"/>
</dbReference>
<dbReference type="InParanoid" id="Q5R7T2"/>
<dbReference type="OrthoDB" id="21615at2759"/>
<dbReference type="Proteomes" id="UP000001595">
    <property type="component" value="Unplaced"/>
</dbReference>
<dbReference type="GO" id="GO:0000786">
    <property type="term" value="C:nucleosome"/>
    <property type="evidence" value="ECO:0000250"/>
    <property type="project" value="UniProtKB"/>
</dbReference>
<dbReference type="GO" id="GO:0005634">
    <property type="term" value="C:nucleus"/>
    <property type="evidence" value="ECO:0007669"/>
    <property type="project" value="UniProtKB-SubCell"/>
</dbReference>
<dbReference type="GO" id="GO:0003677">
    <property type="term" value="F:DNA binding"/>
    <property type="evidence" value="ECO:0007669"/>
    <property type="project" value="UniProtKB-KW"/>
</dbReference>
<dbReference type="GO" id="GO:0042393">
    <property type="term" value="F:histone binding"/>
    <property type="evidence" value="ECO:0000250"/>
    <property type="project" value="UniProtKB"/>
</dbReference>
<dbReference type="GO" id="GO:0051287">
    <property type="term" value="F:NAD binding"/>
    <property type="evidence" value="ECO:0007669"/>
    <property type="project" value="InterPro"/>
</dbReference>
<dbReference type="GO" id="GO:0050661">
    <property type="term" value="F:NADP binding"/>
    <property type="evidence" value="ECO:0007669"/>
    <property type="project" value="InterPro"/>
</dbReference>
<dbReference type="GO" id="GO:0031491">
    <property type="term" value="F:nucleosome binding"/>
    <property type="evidence" value="ECO:0007669"/>
    <property type="project" value="TreeGrafter"/>
</dbReference>
<dbReference type="GO" id="GO:0140673">
    <property type="term" value="P:transcription elongation-coupled chromatin remodeling"/>
    <property type="evidence" value="ECO:0007669"/>
    <property type="project" value="TreeGrafter"/>
</dbReference>
<dbReference type="CDD" id="cd05836">
    <property type="entry name" value="PWWP_GLYR1"/>
    <property type="match status" value="1"/>
</dbReference>
<dbReference type="FunFam" id="3.40.50.720:FF:000058">
    <property type="entry name" value="Putative oxidoreductase GLYR1 homolog"/>
    <property type="match status" value="1"/>
</dbReference>
<dbReference type="FunFam" id="1.10.1040.10:FF:000011">
    <property type="entry name" value="putative oxidoreductase GLYR1 isoform X1"/>
    <property type="match status" value="1"/>
</dbReference>
<dbReference type="FunFam" id="2.30.30.140:FF:000027">
    <property type="entry name" value="putative oxidoreductase GLYR1 isoform X1"/>
    <property type="match status" value="1"/>
</dbReference>
<dbReference type="Gene3D" id="2.30.30.140">
    <property type="match status" value="1"/>
</dbReference>
<dbReference type="Gene3D" id="1.10.1040.10">
    <property type="entry name" value="N-(1-d-carboxylethyl)-l-norvaline Dehydrogenase, domain 2"/>
    <property type="match status" value="1"/>
</dbReference>
<dbReference type="Gene3D" id="3.40.50.720">
    <property type="entry name" value="NAD(P)-binding Rossmann-like Domain"/>
    <property type="match status" value="1"/>
</dbReference>
<dbReference type="InterPro" id="IPR008927">
    <property type="entry name" value="6-PGluconate_DH-like_C_sf"/>
</dbReference>
<dbReference type="InterPro" id="IPR013328">
    <property type="entry name" value="6PGD_dom2"/>
</dbReference>
<dbReference type="InterPro" id="IPR006115">
    <property type="entry name" value="6PGDH_NADP-bd"/>
</dbReference>
<dbReference type="InterPro" id="IPR035501">
    <property type="entry name" value="GLYR1_PWWP"/>
</dbReference>
<dbReference type="InterPro" id="IPR029154">
    <property type="entry name" value="HIBADH-like_NADP-bd"/>
</dbReference>
<dbReference type="InterPro" id="IPR051265">
    <property type="entry name" value="HIBADH-related_NP60_sf"/>
</dbReference>
<dbReference type="InterPro" id="IPR036291">
    <property type="entry name" value="NAD(P)-bd_dom_sf"/>
</dbReference>
<dbReference type="InterPro" id="IPR000313">
    <property type="entry name" value="PWWP_dom"/>
</dbReference>
<dbReference type="PANTHER" id="PTHR43580:SF2">
    <property type="entry name" value="CYTOKINE-LIKE NUCLEAR FACTOR N-PAC"/>
    <property type="match status" value="1"/>
</dbReference>
<dbReference type="PANTHER" id="PTHR43580">
    <property type="entry name" value="OXIDOREDUCTASE GLYR1-RELATED"/>
    <property type="match status" value="1"/>
</dbReference>
<dbReference type="Pfam" id="PF14833">
    <property type="entry name" value="NAD_binding_11"/>
    <property type="match status" value="1"/>
</dbReference>
<dbReference type="Pfam" id="PF03446">
    <property type="entry name" value="NAD_binding_2"/>
    <property type="match status" value="1"/>
</dbReference>
<dbReference type="Pfam" id="PF00855">
    <property type="entry name" value="PWWP"/>
    <property type="match status" value="1"/>
</dbReference>
<dbReference type="SMART" id="SM00293">
    <property type="entry name" value="PWWP"/>
    <property type="match status" value="1"/>
</dbReference>
<dbReference type="SUPFAM" id="SSF48179">
    <property type="entry name" value="6-phosphogluconate dehydrogenase C-terminal domain-like"/>
    <property type="match status" value="1"/>
</dbReference>
<dbReference type="SUPFAM" id="SSF51735">
    <property type="entry name" value="NAD(P)-binding Rossmann-fold domains"/>
    <property type="match status" value="1"/>
</dbReference>
<dbReference type="SUPFAM" id="SSF63748">
    <property type="entry name" value="Tudor/PWWP/MBT"/>
    <property type="match status" value="1"/>
</dbReference>
<dbReference type="PROSITE" id="PS50812">
    <property type="entry name" value="PWWP"/>
    <property type="match status" value="1"/>
</dbReference>
<evidence type="ECO:0000250" key="1">
    <source>
        <dbReference type="UniProtKB" id="Q49A26"/>
    </source>
</evidence>
<evidence type="ECO:0000255" key="2">
    <source>
        <dbReference type="PROSITE-ProRule" id="PRU00162"/>
    </source>
</evidence>
<evidence type="ECO:0000256" key="3">
    <source>
        <dbReference type="SAM" id="MobiDB-lite"/>
    </source>
</evidence>
<evidence type="ECO:0000305" key="4"/>
<comment type="function">
    <text evidence="1">Cytokine-like nuclear factor with chromatin gene reader activity involved in chromatin modification and regulation of gene expression. Acts as a nucleosome-destabilizing factor that is recruited to genes during transcriptional activation. Recognizes and binds histone H3 without a preference for specific epigenetic markers and also binds DNA. Interacts with KDM1B and promotes its histone demethylase activity by facilitating the capture of H3 tails, they form a multifunctional enzyme complex that modifies transcribed chromatin and facilitates Pol II transcription through nucleosomes. Stimulates the acetylation of 'Lys-56' of nucleosomal histone H3 (H3K56ac) by EP300. With GATA4, co-binds a defined set of heart development genes and coregulates their expression during cardiomyocyte differentiation. Regulates p38 MAP kinase activity by mediating stress activation of MAPK14/p38alpha and specifically regulating MAPK14 signaling. Indirectly promotes phosphorylation of MAPK14 and activation of ATF2. The phosphorylation of MAPK14 requires upstream activity of MAP2K4 and MAP2K6.</text>
</comment>
<comment type="subunit">
    <text evidence="1">Homotetramere. Interacts with MAPK14. Interacts with KDM1B at nucleosomes; this interaction stimulates H3K4me1 and H3K4me2 demethylation. Binds to mononucleosomes. Interacts with GATA4; the interaction is required for a synergistic activation of GATA4 target genes transcription.</text>
</comment>
<comment type="subcellular location">
    <subcellularLocation>
        <location evidence="1">Nucleus</location>
    </subcellularLocation>
    <subcellularLocation>
        <location evidence="1">Chromosome</location>
    </subcellularLocation>
    <text evidence="1">Found in actively RNAPolII-transcribed gene bodies.</text>
</comment>
<comment type="domain">
    <text evidence="1">The A.T hook DNA-binding domain is required for the interaction with MAPK14.</text>
</comment>
<comment type="domain">
    <text evidence="1">The PWWP domain is a H3 reader and strongly binds DNA.</text>
</comment>
<comment type="domain">
    <text evidence="1">In the dehydrogenase domain, the conserved NAD(P)H-binding sites and sequence similarity to plant dehydrogenases suggest that this protein may have oxidoreductase activity. However, since the active site is not conserved, the dehydrogenase domain seems to serve as a catalytically inert oligomerization module.</text>
</comment>
<comment type="similarity">
    <text evidence="4">Belongs to the HIBADH-related family. NP60 subfamily.</text>
</comment>
<comment type="sequence caution" evidence="4">
    <conflict type="erroneous initiation">
        <sequence resource="EMBL-CDS" id="CAH92178"/>
    </conflict>
    <text>Extended N-terminus.</text>
</comment>
<name>GLYR1_PONAB</name>
<feature type="chain" id="PRO_0000312124" description="Cytokine-like nuclear factor N-PAC">
    <location>
        <begin position="1"/>
        <end position="553"/>
    </location>
</feature>
<feature type="domain" description="PWWP" evidence="2">
    <location>
        <begin position="8"/>
        <end position="66"/>
    </location>
</feature>
<feature type="DNA-binding region" description="A.T hook" evidence="4">
    <location>
        <begin position="168"/>
        <end position="180"/>
    </location>
</feature>
<feature type="region of interest" description="Disordered" evidence="3">
    <location>
        <begin position="92"/>
        <end position="188"/>
    </location>
</feature>
<feature type="region of interest" description="Interaction with histone H3" evidence="1">
    <location>
        <begin position="214"/>
        <end position="217"/>
    </location>
</feature>
<feature type="region of interest" description="Interaction with KDM1B" evidence="1">
    <location>
        <begin position="216"/>
        <end position="225"/>
    </location>
</feature>
<feature type="region of interest" description="Dehydrogenase domain" evidence="1">
    <location>
        <begin position="261"/>
        <end position="553"/>
    </location>
</feature>
<feature type="compositionally biased region" description="Basic and acidic residues" evidence="3">
    <location>
        <begin position="92"/>
        <end position="145"/>
    </location>
</feature>
<feature type="compositionally biased region" description="Basic and acidic residues" evidence="3">
    <location>
        <begin position="162"/>
        <end position="182"/>
    </location>
</feature>
<feature type="binding site" evidence="1">
    <location>
        <begin position="271"/>
        <end position="285"/>
    </location>
    <ligand>
        <name>NAD(+)</name>
        <dbReference type="ChEBI" id="CHEBI:57540"/>
    </ligand>
</feature>
<feature type="binding site" evidence="1">
    <location>
        <position position="362"/>
    </location>
    <ligand>
        <name>NAD(+)</name>
        <dbReference type="ChEBI" id="CHEBI:57540"/>
    </ligand>
</feature>
<feature type="binding site" evidence="1">
    <location>
        <position position="505"/>
    </location>
    <ligand>
        <name>NAD(+)</name>
        <dbReference type="ChEBI" id="CHEBI:57540"/>
    </ligand>
</feature>
<feature type="site" description="Required to promote KDM1B demethylase activity toward histone H3K4me1 and H3K4me2" evidence="1">
    <location>
        <position position="217"/>
    </location>
</feature>
<feature type="modified residue" description="Phosphoserine" evidence="1">
    <location>
        <position position="130"/>
    </location>
</feature>
<feature type="modified residue" description="Phosphoserine" evidence="1">
    <location>
        <position position="167"/>
    </location>
</feature>
<feature type="modified residue" description="Phosphoserine" evidence="1">
    <location>
        <position position="540"/>
    </location>
</feature>
<feature type="cross-link" description="Glycyl lysine isopeptide (Lys-Gly) (interchain with G-Cter in SUMO2)" evidence="1">
    <location>
        <position position="135"/>
    </location>
</feature>
<feature type="cross-link" description="Glycyl lysine isopeptide (Lys-Gly) (interchain with G-Cter in SUMO2)" evidence="1">
    <location>
        <position position="176"/>
    </location>
</feature>
<feature type="cross-link" description="Glycyl lysine isopeptide (Lys-Gly) (interchain with G-Cter in SUMO2)" evidence="1">
    <location>
        <position position="179"/>
    </location>
</feature>
<feature type="cross-link" description="Glycyl lysine isopeptide (Lys-Gly) (interchain with G-Cter in SUMO2)" evidence="1">
    <location>
        <position position="201"/>
    </location>
</feature>
<feature type="cross-link" description="Glycyl lysine isopeptide (Lys-Gly) (interchain with G-Cter in SUMO2)" evidence="1">
    <location>
        <position position="211"/>
    </location>
</feature>
<feature type="cross-link" description="Glycyl lysine isopeptide (Lys-Gly) (interchain with G-Cter in SUMO2)" evidence="1">
    <location>
        <position position="227"/>
    </location>
</feature>
<feature type="cross-link" description="Glycyl lysine isopeptide (Lys-Gly) (interchain with G-Cter in SUMO2)" evidence="1">
    <location>
        <position position="237"/>
    </location>
</feature>
<feature type="cross-link" description="Glycyl lysine isopeptide (Lys-Gly) (interchain with G-Cter in SUMO2)" evidence="1">
    <location>
        <position position="240"/>
    </location>
</feature>
<feature type="cross-link" description="Glycyl lysine isopeptide (Lys-Gly) (interchain with G-Cter in SUMO2)" evidence="1">
    <location>
        <position position="269"/>
    </location>
</feature>
<feature type="cross-link" description="Glycyl lysine isopeptide (Lys-Gly) (interchain with G-Cter in SUMO2)" evidence="1">
    <location>
        <position position="302"/>
    </location>
</feature>
<gene>
    <name type="primary">GLYR1</name>
    <name type="synonym">NP60</name>
</gene>
<keyword id="KW-0158">Chromosome</keyword>
<keyword id="KW-0238">DNA-binding</keyword>
<keyword id="KW-1017">Isopeptide bond</keyword>
<keyword id="KW-0539">Nucleus</keyword>
<keyword id="KW-0597">Phosphoprotein</keyword>
<keyword id="KW-1185">Reference proteome</keyword>
<keyword id="KW-0832">Ubl conjugation</keyword>
<sequence length="553" mass="60662">MAAVSLRLGDLVWGKLGRYPPWPGKIVNPPKDLKKPRGKKCFFVKFFGTEDHAWIKVEQLKPYHAHKEEMIKINKGKRFQQAVDAVEEFLRRAKGKDQTSSHNSSDDKNRRNSSEERSRPNSGDEKRKLSLSEGKVKKNMGEGKKRVSSGSSERGSKSPLKRAQEQSPRKRGRPPKDEKDLTIPESSTVKGMMAGPMAAFKWQPTATEPVKDADPHFHHFLLSQTEKPAVCYQAITKKLKICEEETGSTSIQAADSTAVNGSITPTDKKIGFLGLGLMGSGIVSNLLKMGHTVTVWDRTAEKCDLFIQEGARLGRTPAEVVSTCDITFACVSDPKAAKDLVLGPSGVLQGIRPRKCYVDMSTVDADTVTELAQVIVSRGGRFLEAPVSGNQQLSNDGMLVILAAGDRGLYEDCSSCFQAMGKTSFFLGEVGNAAKMMLIVNMVQGSFMATIAEGLTLAQVTGQSQQTLLDILNQGQLASIFLDQKCQNILQGNFKPDFYLKYIQKDLRLAIALGDAVNHPTPMAAAANEVYKRAKALDQSDNDMSAVYRAYIH</sequence>
<accession>Q5R7T2</accession>
<protein>
    <recommendedName>
        <fullName>Cytokine-like nuclear factor N-PAC</fullName>
        <shortName>NPAC</shortName>
    </recommendedName>
    <alternativeName>
        <fullName>Glyoxylate reductase 1 homolog</fullName>
    </alternativeName>
    <alternativeName>
        <fullName>Nuclear protein NP60</fullName>
    </alternativeName>
    <alternativeName>
        <fullName>Putative oxidoreductase GLYR1</fullName>
    </alternativeName>
</protein>
<organism>
    <name type="scientific">Pongo abelii</name>
    <name type="common">Sumatran orangutan</name>
    <name type="synonym">Pongo pygmaeus abelii</name>
    <dbReference type="NCBI Taxonomy" id="9601"/>
    <lineage>
        <taxon>Eukaryota</taxon>
        <taxon>Metazoa</taxon>
        <taxon>Chordata</taxon>
        <taxon>Craniata</taxon>
        <taxon>Vertebrata</taxon>
        <taxon>Euteleostomi</taxon>
        <taxon>Mammalia</taxon>
        <taxon>Eutheria</taxon>
        <taxon>Euarchontoglires</taxon>
        <taxon>Primates</taxon>
        <taxon>Haplorrhini</taxon>
        <taxon>Catarrhini</taxon>
        <taxon>Hominidae</taxon>
        <taxon>Pongo</taxon>
    </lineage>
</organism>
<reference key="1">
    <citation type="submission" date="2004-11" db="EMBL/GenBank/DDBJ databases">
        <authorList>
            <consortium name="The German cDNA consortium"/>
        </authorList>
    </citation>
    <scope>NUCLEOTIDE SEQUENCE [LARGE SCALE MRNA]</scope>
    <source>
        <tissue>Brain cortex</tissue>
    </source>
</reference>